<evidence type="ECO:0000255" key="1">
    <source>
        <dbReference type="HAMAP-Rule" id="MF_01368"/>
    </source>
</evidence>
<evidence type="ECO:0000305" key="2"/>
<dbReference type="EMBL" id="CP000416">
    <property type="protein sequence ID" value="ABJ64738.1"/>
    <property type="molecule type" value="Genomic_DNA"/>
</dbReference>
<dbReference type="RefSeq" id="WP_011668472.1">
    <property type="nucleotide sequence ID" value="NC_008497.1"/>
</dbReference>
<dbReference type="SMR" id="Q03PY4"/>
<dbReference type="STRING" id="387344.LVIS_1663"/>
<dbReference type="GeneID" id="56993524"/>
<dbReference type="KEGG" id="lbr:LVIS_1663"/>
<dbReference type="eggNOG" id="COG0203">
    <property type="taxonomic scope" value="Bacteria"/>
</dbReference>
<dbReference type="HOGENOM" id="CLU_074407_2_2_9"/>
<dbReference type="Proteomes" id="UP000001652">
    <property type="component" value="Chromosome"/>
</dbReference>
<dbReference type="GO" id="GO:0022625">
    <property type="term" value="C:cytosolic large ribosomal subunit"/>
    <property type="evidence" value="ECO:0007669"/>
    <property type="project" value="TreeGrafter"/>
</dbReference>
<dbReference type="GO" id="GO:0003735">
    <property type="term" value="F:structural constituent of ribosome"/>
    <property type="evidence" value="ECO:0007669"/>
    <property type="project" value="InterPro"/>
</dbReference>
<dbReference type="GO" id="GO:0006412">
    <property type="term" value="P:translation"/>
    <property type="evidence" value="ECO:0007669"/>
    <property type="project" value="UniProtKB-UniRule"/>
</dbReference>
<dbReference type="FunFam" id="3.90.1030.10:FF:000002">
    <property type="entry name" value="50S ribosomal protein L17"/>
    <property type="match status" value="1"/>
</dbReference>
<dbReference type="Gene3D" id="3.90.1030.10">
    <property type="entry name" value="Ribosomal protein L17"/>
    <property type="match status" value="1"/>
</dbReference>
<dbReference type="HAMAP" id="MF_01368">
    <property type="entry name" value="Ribosomal_bL17"/>
    <property type="match status" value="1"/>
</dbReference>
<dbReference type="InterPro" id="IPR000456">
    <property type="entry name" value="Ribosomal_bL17"/>
</dbReference>
<dbReference type="InterPro" id="IPR047859">
    <property type="entry name" value="Ribosomal_bL17_CS"/>
</dbReference>
<dbReference type="InterPro" id="IPR036373">
    <property type="entry name" value="Ribosomal_bL17_sf"/>
</dbReference>
<dbReference type="NCBIfam" id="TIGR00059">
    <property type="entry name" value="L17"/>
    <property type="match status" value="1"/>
</dbReference>
<dbReference type="PANTHER" id="PTHR14413:SF16">
    <property type="entry name" value="LARGE RIBOSOMAL SUBUNIT PROTEIN BL17M"/>
    <property type="match status" value="1"/>
</dbReference>
<dbReference type="PANTHER" id="PTHR14413">
    <property type="entry name" value="RIBOSOMAL PROTEIN L17"/>
    <property type="match status" value="1"/>
</dbReference>
<dbReference type="Pfam" id="PF01196">
    <property type="entry name" value="Ribosomal_L17"/>
    <property type="match status" value="1"/>
</dbReference>
<dbReference type="SUPFAM" id="SSF64263">
    <property type="entry name" value="Prokaryotic ribosomal protein L17"/>
    <property type="match status" value="1"/>
</dbReference>
<dbReference type="PROSITE" id="PS01167">
    <property type="entry name" value="RIBOSOMAL_L17"/>
    <property type="match status" value="1"/>
</dbReference>
<organism>
    <name type="scientific">Levilactobacillus brevis (strain ATCC 367 / BCRC 12310 / CIP 105137 / JCM 1170 / LMG 11437 / NCIMB 947 / NCTC 947)</name>
    <name type="common">Lactobacillus brevis</name>
    <dbReference type="NCBI Taxonomy" id="387344"/>
    <lineage>
        <taxon>Bacteria</taxon>
        <taxon>Bacillati</taxon>
        <taxon>Bacillota</taxon>
        <taxon>Bacilli</taxon>
        <taxon>Lactobacillales</taxon>
        <taxon>Lactobacillaceae</taxon>
        <taxon>Levilactobacillus</taxon>
    </lineage>
</organism>
<feature type="chain" id="PRO_1000055847" description="Large ribosomal subunit protein bL17">
    <location>
        <begin position="1"/>
        <end position="127"/>
    </location>
</feature>
<reference key="1">
    <citation type="journal article" date="2006" name="Proc. Natl. Acad. Sci. U.S.A.">
        <title>Comparative genomics of the lactic acid bacteria.</title>
        <authorList>
            <person name="Makarova K.S."/>
            <person name="Slesarev A."/>
            <person name="Wolf Y.I."/>
            <person name="Sorokin A."/>
            <person name="Mirkin B."/>
            <person name="Koonin E.V."/>
            <person name="Pavlov A."/>
            <person name="Pavlova N."/>
            <person name="Karamychev V."/>
            <person name="Polouchine N."/>
            <person name="Shakhova V."/>
            <person name="Grigoriev I."/>
            <person name="Lou Y."/>
            <person name="Rohksar D."/>
            <person name="Lucas S."/>
            <person name="Huang K."/>
            <person name="Goodstein D.M."/>
            <person name="Hawkins T."/>
            <person name="Plengvidhya V."/>
            <person name="Welker D."/>
            <person name="Hughes J."/>
            <person name="Goh Y."/>
            <person name="Benson A."/>
            <person name="Baldwin K."/>
            <person name="Lee J.-H."/>
            <person name="Diaz-Muniz I."/>
            <person name="Dosti B."/>
            <person name="Smeianov V."/>
            <person name="Wechter W."/>
            <person name="Barabote R."/>
            <person name="Lorca G."/>
            <person name="Altermann E."/>
            <person name="Barrangou R."/>
            <person name="Ganesan B."/>
            <person name="Xie Y."/>
            <person name="Rawsthorne H."/>
            <person name="Tamir D."/>
            <person name="Parker C."/>
            <person name="Breidt F."/>
            <person name="Broadbent J.R."/>
            <person name="Hutkins R."/>
            <person name="O'Sullivan D."/>
            <person name="Steele J."/>
            <person name="Unlu G."/>
            <person name="Saier M.H. Jr."/>
            <person name="Klaenhammer T."/>
            <person name="Richardson P."/>
            <person name="Kozyavkin S."/>
            <person name="Weimer B.C."/>
            <person name="Mills D.A."/>
        </authorList>
    </citation>
    <scope>NUCLEOTIDE SEQUENCE [LARGE SCALE GENOMIC DNA]</scope>
    <source>
        <strain>ATCC 367 / BCRC 12310 / CIP 105137 / JCM 1170 / LMG 11437 / NCIMB 947 / NCTC 947</strain>
    </source>
</reference>
<keyword id="KW-1185">Reference proteome</keyword>
<keyword id="KW-0687">Ribonucleoprotein</keyword>
<keyword id="KW-0689">Ribosomal protein</keyword>
<gene>
    <name evidence="1" type="primary">rplQ</name>
    <name type="ordered locus">LVIS_1663</name>
</gene>
<sequence>MSYRKLQRTSSQRRALLRDLTTSLILNGRIETTEARAKEVRKTADQMITLGKQGDLHARRQAAAFIRNVVADVKEDGDDVVVTSALQKVFSELAPKYADRKGGYTRIMKTMPRRGDGAAMAILEFVD</sequence>
<name>RL17_LEVBA</name>
<protein>
    <recommendedName>
        <fullName evidence="1">Large ribosomal subunit protein bL17</fullName>
    </recommendedName>
    <alternativeName>
        <fullName evidence="2">50S ribosomal protein L17</fullName>
    </alternativeName>
</protein>
<proteinExistence type="inferred from homology"/>
<accession>Q03PY4</accession>
<comment type="subunit">
    <text evidence="1">Part of the 50S ribosomal subunit. Contacts protein L32.</text>
</comment>
<comment type="similarity">
    <text evidence="1">Belongs to the bacterial ribosomal protein bL17 family.</text>
</comment>